<comment type="catalytic activity">
    <reaction>
        <text>O-phospho-L-seryl-[protein] + H2O = L-seryl-[protein] + phosphate</text>
        <dbReference type="Rhea" id="RHEA:20629"/>
        <dbReference type="Rhea" id="RHEA-COMP:9863"/>
        <dbReference type="Rhea" id="RHEA-COMP:11604"/>
        <dbReference type="ChEBI" id="CHEBI:15377"/>
        <dbReference type="ChEBI" id="CHEBI:29999"/>
        <dbReference type="ChEBI" id="CHEBI:43474"/>
        <dbReference type="ChEBI" id="CHEBI:83421"/>
        <dbReference type="EC" id="3.1.3.16"/>
    </reaction>
</comment>
<comment type="catalytic activity">
    <reaction>
        <text>O-phospho-L-threonyl-[protein] + H2O = L-threonyl-[protein] + phosphate</text>
        <dbReference type="Rhea" id="RHEA:47004"/>
        <dbReference type="Rhea" id="RHEA-COMP:11060"/>
        <dbReference type="Rhea" id="RHEA-COMP:11605"/>
        <dbReference type="ChEBI" id="CHEBI:15377"/>
        <dbReference type="ChEBI" id="CHEBI:30013"/>
        <dbReference type="ChEBI" id="CHEBI:43474"/>
        <dbReference type="ChEBI" id="CHEBI:61977"/>
        <dbReference type="EC" id="3.1.3.16"/>
    </reaction>
</comment>
<comment type="cofactor">
    <cofactor evidence="1">
        <name>Mg(2+)</name>
        <dbReference type="ChEBI" id="CHEBI:18420"/>
    </cofactor>
    <cofactor evidence="1">
        <name>Mn(2+)</name>
        <dbReference type="ChEBI" id="CHEBI:29035"/>
    </cofactor>
    <text evidence="1">Binds 2 magnesium or manganese ions per subunit.</text>
</comment>
<comment type="similarity">
    <text evidence="5">Belongs to the PP2C family.</text>
</comment>
<dbReference type="EC" id="3.1.3.16"/>
<dbReference type="EMBL" id="AC104847">
    <property type="status" value="NOT_ANNOTATED_CDS"/>
    <property type="molecule type" value="Genomic_DNA"/>
</dbReference>
<dbReference type="EMBL" id="AP014967">
    <property type="protein sequence ID" value="BAT14634.1"/>
    <property type="molecule type" value="Genomic_DNA"/>
</dbReference>
<dbReference type="SMR" id="A3CCP9"/>
<dbReference type="FunCoup" id="A3CCP9">
    <property type="interactions" value="289"/>
</dbReference>
<dbReference type="STRING" id="39947.A3CCP9"/>
<dbReference type="PaxDb" id="39947-A3CCP9"/>
<dbReference type="eggNOG" id="KOG0698">
    <property type="taxonomic scope" value="Eukaryota"/>
</dbReference>
<dbReference type="HOGENOM" id="CLU_013173_0_2_1"/>
<dbReference type="InParanoid" id="A3CCP9"/>
<dbReference type="OMA" id="YGESSTC"/>
<dbReference type="Proteomes" id="UP000000763">
    <property type="component" value="Chromosome 11"/>
</dbReference>
<dbReference type="Proteomes" id="UP000059680">
    <property type="component" value="Chromosome 11"/>
</dbReference>
<dbReference type="GO" id="GO:0046872">
    <property type="term" value="F:metal ion binding"/>
    <property type="evidence" value="ECO:0007669"/>
    <property type="project" value="UniProtKB-KW"/>
</dbReference>
<dbReference type="GO" id="GO:0004722">
    <property type="term" value="F:protein serine/threonine phosphatase activity"/>
    <property type="evidence" value="ECO:0000318"/>
    <property type="project" value="GO_Central"/>
</dbReference>
<dbReference type="GO" id="GO:1902531">
    <property type="term" value="P:regulation of intracellular signal transduction"/>
    <property type="evidence" value="ECO:0000318"/>
    <property type="project" value="GO_Central"/>
</dbReference>
<dbReference type="CDD" id="cd00143">
    <property type="entry name" value="PP2Cc"/>
    <property type="match status" value="1"/>
</dbReference>
<dbReference type="Gene3D" id="3.60.40.10">
    <property type="entry name" value="PPM-type phosphatase domain"/>
    <property type="match status" value="1"/>
</dbReference>
<dbReference type="InterPro" id="IPR015655">
    <property type="entry name" value="PP2C"/>
</dbReference>
<dbReference type="InterPro" id="IPR036457">
    <property type="entry name" value="PPM-type-like_dom_sf"/>
</dbReference>
<dbReference type="InterPro" id="IPR001932">
    <property type="entry name" value="PPM-type_phosphatase-like_dom"/>
</dbReference>
<dbReference type="PANTHER" id="PTHR47992">
    <property type="entry name" value="PROTEIN PHOSPHATASE"/>
    <property type="match status" value="1"/>
</dbReference>
<dbReference type="Pfam" id="PF00481">
    <property type="entry name" value="PP2C"/>
    <property type="match status" value="1"/>
</dbReference>
<dbReference type="SMART" id="SM00332">
    <property type="entry name" value="PP2Cc"/>
    <property type="match status" value="1"/>
</dbReference>
<dbReference type="SUPFAM" id="SSF81606">
    <property type="entry name" value="PP2C-like"/>
    <property type="match status" value="1"/>
</dbReference>
<dbReference type="PROSITE" id="PS51746">
    <property type="entry name" value="PPM_2"/>
    <property type="match status" value="1"/>
</dbReference>
<organism>
    <name type="scientific">Oryza sativa subsp. japonica</name>
    <name type="common">Rice</name>
    <dbReference type="NCBI Taxonomy" id="39947"/>
    <lineage>
        <taxon>Eukaryota</taxon>
        <taxon>Viridiplantae</taxon>
        <taxon>Streptophyta</taxon>
        <taxon>Embryophyta</taxon>
        <taxon>Tracheophyta</taxon>
        <taxon>Spermatophyta</taxon>
        <taxon>Magnoliopsida</taxon>
        <taxon>Liliopsida</taxon>
        <taxon>Poales</taxon>
        <taxon>Poaceae</taxon>
        <taxon>BOP clade</taxon>
        <taxon>Oryzoideae</taxon>
        <taxon>Oryzeae</taxon>
        <taxon>Oryzinae</taxon>
        <taxon>Oryza</taxon>
        <taxon>Oryza sativa</taxon>
    </lineage>
</organism>
<reference key="1">
    <citation type="journal article" date="2005" name="BMC Biol.">
        <title>The sequence of rice chromosomes 11 and 12, rich in disease resistance genes and recent gene duplications.</title>
        <authorList>
            <consortium name="The rice chromosomes 11 and 12 sequencing consortia"/>
        </authorList>
    </citation>
    <scope>NUCLEOTIDE SEQUENCE [LARGE SCALE GENOMIC DNA]</scope>
    <source>
        <strain>cv. Nipponbare</strain>
    </source>
</reference>
<reference key="2">
    <citation type="journal article" date="2005" name="Nature">
        <title>The map-based sequence of the rice genome.</title>
        <authorList>
            <consortium name="International rice genome sequencing project (IRGSP)"/>
        </authorList>
    </citation>
    <scope>NUCLEOTIDE SEQUENCE [LARGE SCALE GENOMIC DNA]</scope>
    <source>
        <strain>cv. Nipponbare</strain>
    </source>
</reference>
<reference key="3">
    <citation type="journal article" date="2013" name="Rice">
        <title>Improvement of the Oryza sativa Nipponbare reference genome using next generation sequence and optical map data.</title>
        <authorList>
            <person name="Kawahara Y."/>
            <person name="de la Bastide M."/>
            <person name="Hamilton J.P."/>
            <person name="Kanamori H."/>
            <person name="McCombie W.R."/>
            <person name="Ouyang S."/>
            <person name="Schwartz D.C."/>
            <person name="Tanaka T."/>
            <person name="Wu J."/>
            <person name="Zhou S."/>
            <person name="Childs K.L."/>
            <person name="Davidson R.M."/>
            <person name="Lin H."/>
            <person name="Quesada-Ocampo L."/>
            <person name="Vaillancourt B."/>
            <person name="Sakai H."/>
            <person name="Lee S.S."/>
            <person name="Kim J."/>
            <person name="Numa H."/>
            <person name="Itoh T."/>
            <person name="Buell C.R."/>
            <person name="Matsumoto T."/>
        </authorList>
    </citation>
    <scope>GENOME REANNOTATION</scope>
    <source>
        <strain>cv. Nipponbare</strain>
    </source>
</reference>
<protein>
    <recommendedName>
        <fullName>Putative protein phosphatase 2C 76</fullName>
        <shortName>OsPP2C76</shortName>
        <ecNumber>3.1.3.16</ecNumber>
    </recommendedName>
</protein>
<keyword id="KW-0378">Hydrolase</keyword>
<keyword id="KW-0460">Magnesium</keyword>
<keyword id="KW-0464">Manganese</keyword>
<keyword id="KW-0479">Metal-binding</keyword>
<keyword id="KW-0904">Protein phosphatase</keyword>
<keyword id="KW-1185">Reference proteome</keyword>
<keyword id="KW-0732">Signal</keyword>
<name>P2C76_ORYSJ</name>
<proteinExistence type="inferred from homology"/>
<feature type="signal peptide" evidence="2">
    <location>
        <begin position="1"/>
        <end position="34"/>
    </location>
</feature>
<feature type="chain" id="PRO_0000363323" description="Putative protein phosphatase 2C 76">
    <location>
        <begin position="35"/>
        <end position="499"/>
    </location>
</feature>
<feature type="domain" description="PPM-type phosphatase" evidence="3">
    <location>
        <begin position="92"/>
        <end position="457"/>
    </location>
</feature>
<feature type="region of interest" description="Disordered" evidence="4">
    <location>
        <begin position="67"/>
        <end position="101"/>
    </location>
</feature>
<feature type="region of interest" description="Disordered" evidence="4">
    <location>
        <begin position="286"/>
        <end position="306"/>
    </location>
</feature>
<feature type="binding site" evidence="1">
    <location>
        <position position="138"/>
    </location>
    <ligand>
        <name>Mn(2+)</name>
        <dbReference type="ChEBI" id="CHEBI:29035"/>
        <label>1</label>
    </ligand>
</feature>
<feature type="binding site" evidence="1">
    <location>
        <position position="138"/>
    </location>
    <ligand>
        <name>Mn(2+)</name>
        <dbReference type="ChEBI" id="CHEBI:29035"/>
        <label>2</label>
    </ligand>
</feature>
<feature type="binding site" evidence="1">
    <location>
        <position position="139"/>
    </location>
    <ligand>
        <name>Mn(2+)</name>
        <dbReference type="ChEBI" id="CHEBI:29035"/>
        <label>1</label>
    </ligand>
</feature>
<feature type="binding site" evidence="1">
    <location>
        <position position="397"/>
    </location>
    <ligand>
        <name>Mn(2+)</name>
        <dbReference type="ChEBI" id="CHEBI:29035"/>
        <label>2</label>
    </ligand>
</feature>
<feature type="binding site" evidence="1">
    <location>
        <position position="448"/>
    </location>
    <ligand>
        <name>Mn(2+)</name>
        <dbReference type="ChEBI" id="CHEBI:29035"/>
        <label>2</label>
    </ligand>
</feature>
<accession>A3CCP9</accession>
<accession>A0A0N7KT50</accession>
<evidence type="ECO:0000250" key="1"/>
<evidence type="ECO:0000255" key="2"/>
<evidence type="ECO:0000255" key="3">
    <source>
        <dbReference type="PROSITE-ProRule" id="PRU01082"/>
    </source>
</evidence>
<evidence type="ECO:0000256" key="4">
    <source>
        <dbReference type="SAM" id="MobiDB-lite"/>
    </source>
</evidence>
<evidence type="ECO:0000305" key="5"/>
<sequence>MRLGCSGRRRRLLRAALLRLVVLVLVAPPRRCAGESATCLAVYREGGAPAVFQSAHCPRWTLLAPSAGSGGEGDGDRRSSSSSPPPPPHPRGCHVAVDRGRRRSQEDRAVCALGIRIPFIGIYHKIKEVDVGVVAVFDGHNGAEASEMASKLLLEYFLLHVYFLLDGIYSIMFRKSTGKLTYKEVTILNNVINLYKEDQSSHSKGSCWALPAILDRSFHMEVLKESLLRAVHDVDLTFSKEALRNNFESGSTAAVILIVDGQIIAANVGDSKAFLCSESHDSSIDKKTSVVSGKRRRKRNSNNRDDFALANYDGPFYNVKELTKDHHPDREDERSRVEAAGGYVLEWAGVHRVNGELALSRAIGDVPYKRYGVIPTPELTEWQSLSANDTFLIASSDGVFEKMTMQDVCDLMLRVKLGVNQELGSFAVTQRNLADYVVDLALEKGTTDNVAAVIVPLGSHYSSKVTLEDWYMLEENSKTSISPLQTIPYQQKSGRFNVQ</sequence>
<gene>
    <name type="ordered locus">Os11g0586001</name>
    <name type="ordered locus">LOC_Os11g37540</name>
</gene>